<sequence length="336" mass="37218">MTAIDFHKLAKIELHCHLDGSLSLSTIRHLAELAQIDLPEDDEELKQHVTAPVTCESLLEYLESFDYIRPLLQTNEALTIAAYDVAKQAALENVIYIEVRFAPELSMDKGLTVTETIDAVCQGLRQAQEEFGIIAKALVCGMRQSDQSLTACILDEANQVRDSDFVGFDFAGDELNYGPAAIKPLIEQVKSYNRPMTFHAGECGCPAFLAESIAMGIKRNGHATILAQEPELLDEFVKNGVTGELCLTSNLQTKAAVTVNDFPYLKMKAAGANITINTDNRTVSDTNLTKEYELYHKYFDSTVQDFYAHNKTAIEASFASDEEKEELLARLAKAYS</sequence>
<comment type="function">
    <text evidence="1">Catalyzes the hydrolytic deamination of adenosine and 2-deoxyadenosine.</text>
</comment>
<comment type="catalytic activity">
    <reaction evidence="1">
        <text>adenosine + H2O + H(+) = inosine + NH4(+)</text>
        <dbReference type="Rhea" id="RHEA:24408"/>
        <dbReference type="ChEBI" id="CHEBI:15377"/>
        <dbReference type="ChEBI" id="CHEBI:15378"/>
        <dbReference type="ChEBI" id="CHEBI:16335"/>
        <dbReference type="ChEBI" id="CHEBI:17596"/>
        <dbReference type="ChEBI" id="CHEBI:28938"/>
        <dbReference type="EC" id="3.5.4.4"/>
    </reaction>
    <physiologicalReaction direction="left-to-right" evidence="1">
        <dbReference type="Rhea" id="RHEA:24409"/>
    </physiologicalReaction>
</comment>
<comment type="catalytic activity">
    <reaction evidence="1">
        <text>2'-deoxyadenosine + H2O + H(+) = 2'-deoxyinosine + NH4(+)</text>
        <dbReference type="Rhea" id="RHEA:28190"/>
        <dbReference type="ChEBI" id="CHEBI:15377"/>
        <dbReference type="ChEBI" id="CHEBI:15378"/>
        <dbReference type="ChEBI" id="CHEBI:17256"/>
        <dbReference type="ChEBI" id="CHEBI:28938"/>
        <dbReference type="ChEBI" id="CHEBI:28997"/>
        <dbReference type="EC" id="3.5.4.4"/>
    </reaction>
    <physiologicalReaction direction="left-to-right" evidence="1">
        <dbReference type="Rhea" id="RHEA:28191"/>
    </physiologicalReaction>
</comment>
<comment type="cofactor">
    <cofactor evidence="1">
        <name>Zn(2+)</name>
        <dbReference type="ChEBI" id="CHEBI:29105"/>
    </cofactor>
    <text evidence="1">Binds 1 zinc ion per subunit.</text>
</comment>
<comment type="similarity">
    <text evidence="1">Belongs to the metallo-dependent hydrolases superfamily. Adenosine and AMP deaminases family. Adenosine deaminase subfamily.</text>
</comment>
<organism>
    <name type="scientific">Streptococcus thermophilus (strain ATCC BAA-491 / LMD-9)</name>
    <dbReference type="NCBI Taxonomy" id="322159"/>
    <lineage>
        <taxon>Bacteria</taxon>
        <taxon>Bacillati</taxon>
        <taxon>Bacillota</taxon>
        <taxon>Bacilli</taxon>
        <taxon>Lactobacillales</taxon>
        <taxon>Streptococcaceae</taxon>
        <taxon>Streptococcus</taxon>
    </lineage>
</organism>
<name>ADD_STRTD</name>
<reference key="1">
    <citation type="journal article" date="2006" name="Proc. Natl. Acad. Sci. U.S.A.">
        <title>Comparative genomics of the lactic acid bacteria.</title>
        <authorList>
            <person name="Makarova K.S."/>
            <person name="Slesarev A."/>
            <person name="Wolf Y.I."/>
            <person name="Sorokin A."/>
            <person name="Mirkin B."/>
            <person name="Koonin E.V."/>
            <person name="Pavlov A."/>
            <person name="Pavlova N."/>
            <person name="Karamychev V."/>
            <person name="Polouchine N."/>
            <person name="Shakhova V."/>
            <person name="Grigoriev I."/>
            <person name="Lou Y."/>
            <person name="Rohksar D."/>
            <person name="Lucas S."/>
            <person name="Huang K."/>
            <person name="Goodstein D.M."/>
            <person name="Hawkins T."/>
            <person name="Plengvidhya V."/>
            <person name="Welker D."/>
            <person name="Hughes J."/>
            <person name="Goh Y."/>
            <person name="Benson A."/>
            <person name="Baldwin K."/>
            <person name="Lee J.-H."/>
            <person name="Diaz-Muniz I."/>
            <person name="Dosti B."/>
            <person name="Smeianov V."/>
            <person name="Wechter W."/>
            <person name="Barabote R."/>
            <person name="Lorca G."/>
            <person name="Altermann E."/>
            <person name="Barrangou R."/>
            <person name="Ganesan B."/>
            <person name="Xie Y."/>
            <person name="Rawsthorne H."/>
            <person name="Tamir D."/>
            <person name="Parker C."/>
            <person name="Breidt F."/>
            <person name="Broadbent J.R."/>
            <person name="Hutkins R."/>
            <person name="O'Sullivan D."/>
            <person name="Steele J."/>
            <person name="Unlu G."/>
            <person name="Saier M.H. Jr."/>
            <person name="Klaenhammer T."/>
            <person name="Richardson P."/>
            <person name="Kozyavkin S."/>
            <person name="Weimer B.C."/>
            <person name="Mills D.A."/>
        </authorList>
    </citation>
    <scope>NUCLEOTIDE SEQUENCE [LARGE SCALE GENOMIC DNA]</scope>
    <source>
        <strain>ATCC BAA-491 / LMD-9</strain>
    </source>
</reference>
<accession>Q03L81</accession>
<gene>
    <name evidence="1" type="primary">add</name>
    <name type="ordered locus">STER_0791</name>
</gene>
<evidence type="ECO:0000255" key="1">
    <source>
        <dbReference type="HAMAP-Rule" id="MF_00540"/>
    </source>
</evidence>
<dbReference type="EC" id="3.5.4.4" evidence="1"/>
<dbReference type="EMBL" id="CP000419">
    <property type="protein sequence ID" value="ABJ66041.1"/>
    <property type="molecule type" value="Genomic_DNA"/>
</dbReference>
<dbReference type="RefSeq" id="WP_011681015.1">
    <property type="nucleotide sequence ID" value="NC_008532.1"/>
</dbReference>
<dbReference type="SMR" id="Q03L81"/>
<dbReference type="KEGG" id="ste:STER_0791"/>
<dbReference type="HOGENOM" id="CLU_039228_0_0_9"/>
<dbReference type="GO" id="GO:0005829">
    <property type="term" value="C:cytosol"/>
    <property type="evidence" value="ECO:0007669"/>
    <property type="project" value="TreeGrafter"/>
</dbReference>
<dbReference type="GO" id="GO:0046936">
    <property type="term" value="F:2'-deoxyadenosine deaminase activity"/>
    <property type="evidence" value="ECO:0007669"/>
    <property type="project" value="RHEA"/>
</dbReference>
<dbReference type="GO" id="GO:0004000">
    <property type="term" value="F:adenosine deaminase activity"/>
    <property type="evidence" value="ECO:0007669"/>
    <property type="project" value="UniProtKB-UniRule"/>
</dbReference>
<dbReference type="GO" id="GO:0008270">
    <property type="term" value="F:zinc ion binding"/>
    <property type="evidence" value="ECO:0007669"/>
    <property type="project" value="UniProtKB-UniRule"/>
</dbReference>
<dbReference type="GO" id="GO:0006154">
    <property type="term" value="P:adenosine catabolic process"/>
    <property type="evidence" value="ECO:0007669"/>
    <property type="project" value="TreeGrafter"/>
</dbReference>
<dbReference type="GO" id="GO:0043103">
    <property type="term" value="P:hypoxanthine salvage"/>
    <property type="evidence" value="ECO:0007669"/>
    <property type="project" value="TreeGrafter"/>
</dbReference>
<dbReference type="GO" id="GO:0046103">
    <property type="term" value="P:inosine biosynthetic process"/>
    <property type="evidence" value="ECO:0007669"/>
    <property type="project" value="TreeGrafter"/>
</dbReference>
<dbReference type="GO" id="GO:0009117">
    <property type="term" value="P:nucleotide metabolic process"/>
    <property type="evidence" value="ECO:0007669"/>
    <property type="project" value="UniProtKB-KW"/>
</dbReference>
<dbReference type="GO" id="GO:0009168">
    <property type="term" value="P:purine ribonucleoside monophosphate biosynthetic process"/>
    <property type="evidence" value="ECO:0007669"/>
    <property type="project" value="UniProtKB-UniRule"/>
</dbReference>
<dbReference type="Gene3D" id="3.20.20.140">
    <property type="entry name" value="Metal-dependent hydrolases"/>
    <property type="match status" value="1"/>
</dbReference>
<dbReference type="HAMAP" id="MF_00540">
    <property type="entry name" value="A_deaminase"/>
    <property type="match status" value="1"/>
</dbReference>
<dbReference type="InterPro" id="IPR028893">
    <property type="entry name" value="A_deaminase"/>
</dbReference>
<dbReference type="InterPro" id="IPR001365">
    <property type="entry name" value="A_deaminase_dom"/>
</dbReference>
<dbReference type="InterPro" id="IPR006330">
    <property type="entry name" value="Ado/ade_deaminase"/>
</dbReference>
<dbReference type="InterPro" id="IPR032466">
    <property type="entry name" value="Metal_Hydrolase"/>
</dbReference>
<dbReference type="NCBIfam" id="TIGR01430">
    <property type="entry name" value="aden_deam"/>
    <property type="match status" value="1"/>
</dbReference>
<dbReference type="PANTHER" id="PTHR11409">
    <property type="entry name" value="ADENOSINE DEAMINASE"/>
    <property type="match status" value="1"/>
</dbReference>
<dbReference type="PANTHER" id="PTHR11409:SF43">
    <property type="entry name" value="ADENOSINE DEAMINASE"/>
    <property type="match status" value="1"/>
</dbReference>
<dbReference type="Pfam" id="PF00962">
    <property type="entry name" value="A_deaminase"/>
    <property type="match status" value="1"/>
</dbReference>
<dbReference type="SUPFAM" id="SSF51556">
    <property type="entry name" value="Metallo-dependent hydrolases"/>
    <property type="match status" value="1"/>
</dbReference>
<keyword id="KW-0378">Hydrolase</keyword>
<keyword id="KW-0479">Metal-binding</keyword>
<keyword id="KW-0546">Nucleotide metabolism</keyword>
<keyword id="KW-0862">Zinc</keyword>
<feature type="chain" id="PRO_1000017712" description="Adenosine deaminase">
    <location>
        <begin position="1"/>
        <end position="336"/>
    </location>
</feature>
<feature type="active site" description="Proton donor" evidence="1">
    <location>
        <position position="202"/>
    </location>
</feature>
<feature type="binding site" evidence="1">
    <location>
        <position position="15"/>
    </location>
    <ligand>
        <name>Zn(2+)</name>
        <dbReference type="ChEBI" id="CHEBI:29105"/>
        <note>catalytic</note>
    </ligand>
</feature>
<feature type="binding site" evidence="1">
    <location>
        <position position="17"/>
    </location>
    <ligand>
        <name>substrate</name>
    </ligand>
</feature>
<feature type="binding site" evidence="1">
    <location>
        <position position="17"/>
    </location>
    <ligand>
        <name>Zn(2+)</name>
        <dbReference type="ChEBI" id="CHEBI:29105"/>
        <note>catalytic</note>
    </ligand>
</feature>
<feature type="binding site" evidence="1">
    <location>
        <position position="19"/>
    </location>
    <ligand>
        <name>substrate</name>
    </ligand>
</feature>
<feature type="binding site" evidence="1">
    <location>
        <position position="172"/>
    </location>
    <ligand>
        <name>substrate</name>
    </ligand>
</feature>
<feature type="binding site" evidence="1">
    <location>
        <position position="199"/>
    </location>
    <ligand>
        <name>Zn(2+)</name>
        <dbReference type="ChEBI" id="CHEBI:29105"/>
        <note>catalytic</note>
    </ligand>
</feature>
<feature type="binding site" evidence="1">
    <location>
        <position position="279"/>
    </location>
    <ligand>
        <name>Zn(2+)</name>
        <dbReference type="ChEBI" id="CHEBI:29105"/>
        <note>catalytic</note>
    </ligand>
</feature>
<feature type="site" description="Important for catalytic activity" evidence="1">
    <location>
        <position position="222"/>
    </location>
</feature>
<proteinExistence type="inferred from homology"/>
<protein>
    <recommendedName>
        <fullName evidence="1">Adenosine deaminase</fullName>
        <ecNumber evidence="1">3.5.4.4</ecNumber>
    </recommendedName>
    <alternativeName>
        <fullName evidence="1">Adenosine aminohydrolase</fullName>
    </alternativeName>
</protein>